<reference key="1">
    <citation type="journal article" date="2007" name="BMC Microbiol.">
        <title>Subtle genetic changes enhance virulence of methicillin resistant and sensitive Staphylococcus aureus.</title>
        <authorList>
            <person name="Highlander S.K."/>
            <person name="Hulten K.G."/>
            <person name="Qin X."/>
            <person name="Jiang H."/>
            <person name="Yerrapragada S."/>
            <person name="Mason E.O. Jr."/>
            <person name="Shang Y."/>
            <person name="Williams T.M."/>
            <person name="Fortunov R.M."/>
            <person name="Liu Y."/>
            <person name="Igboeli O."/>
            <person name="Petrosino J."/>
            <person name="Tirumalai M."/>
            <person name="Uzman A."/>
            <person name="Fox G.E."/>
            <person name="Cardenas A.M."/>
            <person name="Muzny D.M."/>
            <person name="Hemphill L."/>
            <person name="Ding Y."/>
            <person name="Dugan S."/>
            <person name="Blyth P.R."/>
            <person name="Buhay C.J."/>
            <person name="Dinh H.H."/>
            <person name="Hawes A.C."/>
            <person name="Holder M."/>
            <person name="Kovar C.L."/>
            <person name="Lee S.L."/>
            <person name="Liu W."/>
            <person name="Nazareth L.V."/>
            <person name="Wang Q."/>
            <person name="Zhou J."/>
            <person name="Kaplan S.L."/>
            <person name="Weinstock G.M."/>
        </authorList>
    </citation>
    <scope>NUCLEOTIDE SEQUENCE [LARGE SCALE GENOMIC DNA]</scope>
    <source>
        <strain>USA300 / TCH1516</strain>
    </source>
</reference>
<name>Y1040_STAAT</name>
<protein>
    <recommendedName>
        <fullName evidence="1">UPF0223 protein USA300HOU_1040</fullName>
    </recommendedName>
</protein>
<dbReference type="EMBL" id="CP000730">
    <property type="protein sequence ID" value="ABX29060.1"/>
    <property type="molecule type" value="Genomic_DNA"/>
</dbReference>
<dbReference type="RefSeq" id="WP_000455597.1">
    <property type="nucleotide sequence ID" value="NC_010079.1"/>
</dbReference>
<dbReference type="SMR" id="A8Z1N7"/>
<dbReference type="KEGG" id="sax:USA300HOU_1040"/>
<dbReference type="HOGENOM" id="CLU_166693_0_0_9"/>
<dbReference type="BioCyc" id="SAUR451516-HMP:GTV5-1060-MONOMER"/>
<dbReference type="Gene3D" id="1.10.220.80">
    <property type="entry name" value="BH2638-like"/>
    <property type="match status" value="1"/>
</dbReference>
<dbReference type="HAMAP" id="MF_01041">
    <property type="entry name" value="UPF0223"/>
    <property type="match status" value="1"/>
</dbReference>
<dbReference type="InterPro" id="IPR023324">
    <property type="entry name" value="BH2638-like_sf"/>
</dbReference>
<dbReference type="InterPro" id="IPR007920">
    <property type="entry name" value="UPF0223"/>
</dbReference>
<dbReference type="NCBIfam" id="NF003353">
    <property type="entry name" value="PRK04387.1"/>
    <property type="match status" value="1"/>
</dbReference>
<dbReference type="Pfam" id="PF05256">
    <property type="entry name" value="UPF0223"/>
    <property type="match status" value="1"/>
</dbReference>
<dbReference type="PIRSF" id="PIRSF037260">
    <property type="entry name" value="UPF0223"/>
    <property type="match status" value="1"/>
</dbReference>
<dbReference type="SUPFAM" id="SSF158504">
    <property type="entry name" value="BH2638-like"/>
    <property type="match status" value="1"/>
</dbReference>
<feature type="chain" id="PRO_1000084342" description="UPF0223 protein USA300HOU_1040">
    <location>
        <begin position="1"/>
        <end position="91"/>
    </location>
</feature>
<comment type="similarity">
    <text evidence="1">Belongs to the UPF0223 family.</text>
</comment>
<evidence type="ECO:0000255" key="1">
    <source>
        <dbReference type="HAMAP-Rule" id="MF_01041"/>
    </source>
</evidence>
<accession>A8Z1N7</accession>
<organism>
    <name type="scientific">Staphylococcus aureus (strain USA300 / TCH1516)</name>
    <dbReference type="NCBI Taxonomy" id="451516"/>
    <lineage>
        <taxon>Bacteria</taxon>
        <taxon>Bacillati</taxon>
        <taxon>Bacillota</taxon>
        <taxon>Bacilli</taxon>
        <taxon>Bacillales</taxon>
        <taxon>Staphylococcaceae</taxon>
        <taxon>Staphylococcus</taxon>
    </lineage>
</organism>
<proteinExistence type="inferred from homology"/>
<gene>
    <name type="ordered locus">USA300HOU_1040</name>
</gene>
<sequence>MEYEYPIDLDWSNEEMISVINFFNHVEKYYESGVTAGDFMGAYKRFKEIVPAKAEEKQIFNTFEKSSGYNSYKAVQDVKTHSEEQRVTAKK</sequence>